<accession>Q58688</accession>
<name>Y1292_METJA</name>
<protein>
    <recommendedName>
        <fullName>Uncharacterized protein MJ1292</fullName>
    </recommendedName>
</protein>
<reference key="1">
    <citation type="journal article" date="1996" name="Science">
        <title>Complete genome sequence of the methanogenic archaeon, Methanococcus jannaschii.</title>
        <authorList>
            <person name="Bult C.J."/>
            <person name="White O."/>
            <person name="Olsen G.J."/>
            <person name="Zhou L."/>
            <person name="Fleischmann R.D."/>
            <person name="Sutton G.G."/>
            <person name="Blake J.A."/>
            <person name="FitzGerald L.M."/>
            <person name="Clayton R.A."/>
            <person name="Gocayne J.D."/>
            <person name="Kerlavage A.R."/>
            <person name="Dougherty B.A."/>
            <person name="Tomb J.-F."/>
            <person name="Adams M.D."/>
            <person name="Reich C.I."/>
            <person name="Overbeek R."/>
            <person name="Kirkness E.F."/>
            <person name="Weinstock K.G."/>
            <person name="Merrick J.M."/>
            <person name="Glodek A."/>
            <person name="Scott J.L."/>
            <person name="Geoghagen N.S.M."/>
            <person name="Weidman J.F."/>
            <person name="Fuhrmann J.L."/>
            <person name="Nguyen D."/>
            <person name="Utterback T.R."/>
            <person name="Kelley J.M."/>
            <person name="Peterson J.D."/>
            <person name="Sadow P.W."/>
            <person name="Hanna M.C."/>
            <person name="Cotton M.D."/>
            <person name="Roberts K.M."/>
            <person name="Hurst M.A."/>
            <person name="Kaine B.P."/>
            <person name="Borodovsky M."/>
            <person name="Klenk H.-P."/>
            <person name="Fraser C.M."/>
            <person name="Smith H.O."/>
            <person name="Woese C.R."/>
            <person name="Venter J.C."/>
        </authorList>
    </citation>
    <scope>NUCLEOTIDE SEQUENCE [LARGE SCALE GENOMIC DNA]</scope>
    <source>
        <strain>ATCC 43067 / DSM 2661 / JAL-1 / JCM 10045 / NBRC 100440</strain>
    </source>
</reference>
<reference key="2">
    <citation type="submission" date="1998-02" db="EMBL/GenBank/DDBJ databases">
        <authorList>
            <person name="Bult C.J."/>
            <person name="White O."/>
            <person name="Olsen G.J."/>
            <person name="Zhou L."/>
            <person name="Fleischmann R.D."/>
            <person name="Sutton G.G."/>
            <person name="Blake J.A."/>
            <person name="FitzGerald L.M."/>
            <person name="Clayton R.A."/>
            <person name="Gocayne J.D."/>
            <person name="Kerlavage A.R."/>
            <person name="Dougherty B.A."/>
            <person name="Tomb J.-F."/>
            <person name="Adams M.D."/>
            <person name="Reich C.I."/>
            <person name="Overbeek R."/>
            <person name="Kirkness E.F."/>
            <person name="Weinstock K.G."/>
            <person name="Merrick J.M."/>
            <person name="Glodek A."/>
            <person name="Scott J.L."/>
            <person name="Geoghagen N.S.M."/>
            <person name="Weidman J.F."/>
            <person name="Fuhrmann J.L."/>
            <person name="Nguyen D."/>
            <person name="Utterback T.R."/>
            <person name="Kelley J.M."/>
            <person name="Peterson J.D."/>
            <person name="Sadow P.W."/>
            <person name="Hanna M.C."/>
            <person name="Cotton M.D."/>
            <person name="Roberts K.M."/>
            <person name="Hurst M.A."/>
            <person name="Kaine B.P."/>
            <person name="Borodovsky M."/>
            <person name="Klenk H.-P."/>
            <person name="Fraser C.M."/>
            <person name="Smith H.O."/>
            <person name="Woese C.R."/>
            <person name="Venter J.C."/>
        </authorList>
    </citation>
    <scope>SEQUENCE REVISION</scope>
</reference>
<gene>
    <name type="ordered locus">MJ1292</name>
</gene>
<dbReference type="EMBL" id="L77117">
    <property type="protein sequence ID" value="AAB99308.1"/>
    <property type="molecule type" value="Genomic_DNA"/>
</dbReference>
<dbReference type="RefSeq" id="WP_010870808.1">
    <property type="nucleotide sequence ID" value="NC_000909.1"/>
</dbReference>
<dbReference type="STRING" id="243232.MJ_1292"/>
<dbReference type="PaxDb" id="243232-MJ_1292"/>
<dbReference type="EnsemblBacteria" id="AAB99308">
    <property type="protein sequence ID" value="AAB99308"/>
    <property type="gene ID" value="MJ_1292"/>
</dbReference>
<dbReference type="GeneID" id="71696689"/>
<dbReference type="KEGG" id="mja:MJ_1292"/>
<dbReference type="eggNOG" id="arCOG05057">
    <property type="taxonomic scope" value="Archaea"/>
</dbReference>
<dbReference type="HOGENOM" id="CLU_493165_0_0_2"/>
<dbReference type="InParanoid" id="Q58688"/>
<dbReference type="Proteomes" id="UP000000805">
    <property type="component" value="Chromosome"/>
</dbReference>
<sequence length="552" mass="63978">MKFKYIVLLFALSLALITVNGLEIKDIDYSDSSQYLIITVSNPDNNINANISIIGYIDNKIDTQVEMFNYSIPKYSLMFIRKKMVFNEKGVHTVFVTIKSNNITYTFYKKINITYAYNSKVPVPEEEVTKKIEIEGLEFEICPYPYPPFYDFVYVTIRNNDYVPHYVNISFTASLQGTYYIIKDNKIIKSNPPSNGLIIKSWTPNVYVPPKSKIIIPIKVNFYYSGKYTITVKAVSDNHYSTEKTVKGNTVILKSLFGDEIKVYNVEIACPLYVYNVRCEDEYGDYAYSNWFDVDVNNTVDYDVYGTLQVFLCKKEGDNYLILNNKTINKYFLAKEFNDGYSIPVKLNTSALNPYDENFTIFVLCKTGNMESFYYKTFTKPIKINSLEVKNYPEHYYFVDESIFYDVYVNVTNNLNKKIYANISIKDIYNKTYSKEVELNKSCVNIIKFSGLKINAKDLSHDGKIKLKFIVTAITPPYEKYYIIKKNISINLSLIPTPPVYLCSNLNDEIFVGYPQNLSFSLKKVVGRCVETRVYITVPDDIKKYTILKRSI</sequence>
<organism>
    <name type="scientific">Methanocaldococcus jannaschii (strain ATCC 43067 / DSM 2661 / JAL-1 / JCM 10045 / NBRC 100440)</name>
    <name type="common">Methanococcus jannaschii</name>
    <dbReference type="NCBI Taxonomy" id="243232"/>
    <lineage>
        <taxon>Archaea</taxon>
        <taxon>Methanobacteriati</taxon>
        <taxon>Methanobacteriota</taxon>
        <taxon>Methanomada group</taxon>
        <taxon>Methanococci</taxon>
        <taxon>Methanococcales</taxon>
        <taxon>Methanocaldococcaceae</taxon>
        <taxon>Methanocaldococcus</taxon>
    </lineage>
</organism>
<feature type="chain" id="PRO_0000107258" description="Uncharacterized protein MJ1292">
    <location>
        <begin position="1"/>
        <end position="552"/>
    </location>
</feature>
<proteinExistence type="predicted"/>
<keyword id="KW-1185">Reference proteome</keyword>